<keyword id="KW-0235">DNA replication</keyword>
<keyword id="KW-1048">Host nucleus</keyword>
<keyword id="KW-1185">Reference proteome</keyword>
<keyword id="KW-0804">Transcription</keyword>
<keyword id="KW-0805">Transcription regulation</keyword>
<keyword id="KW-1194">Viral DNA replication</keyword>
<accession>P21288</accession>
<organism>
    <name type="scientific">Autographa californica nuclear polyhedrosis virus</name>
    <name type="common">AcMNPV</name>
    <dbReference type="NCBI Taxonomy" id="46015"/>
    <lineage>
        <taxon>Viruses</taxon>
        <taxon>Viruses incertae sedis</taxon>
        <taxon>Naldaviricetes</taxon>
        <taxon>Lefavirales</taxon>
        <taxon>Baculoviridae</taxon>
        <taxon>Alphabaculovirus</taxon>
        <taxon>Alphabaculovirus aucalifornicae</taxon>
    </lineage>
</organism>
<sequence>MPPKNCTHLGGCDSDCLTRSEIQALFREAINTLKHTMNTENVCAHMLDIVSFERIKEYIRANLGHFTVITDKCSKRKVCLHHKRIARLLGIKKIYHQEYKRVVSKVYKKQTW</sequence>
<feature type="chain" id="PRO_0000132834" description="Late expression factor 11">
    <location>
        <begin position="1"/>
        <end position="112"/>
    </location>
</feature>
<feature type="region of interest" description="Dimer 1 domain" evidence="3">
    <location>
        <begin position="42"/>
        <end position="61"/>
    </location>
</feature>
<feature type="region of interest" description="Dimer 2 domain" evidence="3">
    <location>
        <begin position="72"/>
        <end position="101"/>
    </location>
</feature>
<gene>
    <name type="primary">LEF-11</name>
    <name type="ORF">ORF37</name>
</gene>
<organismHost>
    <name type="scientific">Lepidoptera</name>
    <name type="common">butterflies and moths</name>
    <dbReference type="NCBI Taxonomy" id="7088"/>
</organismHost>
<comment type="function">
    <text evidence="2 3">Plays an essential role in viral genome replication. Involved also in late/very late gene activation.</text>
</comment>
<comment type="subunit">
    <text evidence="3">Homooligomer.</text>
</comment>
<comment type="subcellular location">
    <subcellularLocation>
        <location evidence="1">Host nucleus</location>
    </subcellularLocation>
</comment>
<comment type="similarity">
    <text evidence="4">Belongs to the baculoviridae LEF-11 family.</text>
</comment>
<evidence type="ECO:0000269" key="1">
    <source>
    </source>
</evidence>
<evidence type="ECO:0000269" key="2">
    <source>
    </source>
</evidence>
<evidence type="ECO:0000269" key="3">
    <source>
    </source>
</evidence>
<evidence type="ECO:0000305" key="4"/>
<reference key="1">
    <citation type="journal article" date="1994" name="Virology">
        <title>The complete DNA sequence of Autographa californica nuclear polyhedrosis virus.</title>
        <authorList>
            <person name="Ayres M.D."/>
            <person name="Howard S.C."/>
            <person name="Kuzio J."/>
            <person name="Lopez-Ferber M."/>
            <person name="Possee R.D."/>
        </authorList>
    </citation>
    <scope>NUCLEOTIDE SEQUENCE [LARGE SCALE GENOMIC DNA]</scope>
    <source>
        <strain>C6</strain>
    </source>
</reference>
<reference key="2">
    <citation type="journal article" date="1990" name="Virology">
        <title>Nucleotide sequence and characterization of the 39K gene region of Autographa californica nuclear polyhedrosis virus.</title>
        <authorList>
            <person name="Guarino L.A."/>
            <person name="Smith M.W."/>
        </authorList>
    </citation>
    <scope>NUCLEOTIDE SEQUENCE [GENOMIC DNA]</scope>
</reference>
<reference key="3">
    <citation type="journal article" date="1995" name="J. Virol.">
        <title>Eighteen baculovirus genes, including lef-11, p35, 39K, and p47, support late gene expression.</title>
        <authorList>
            <person name="Todd J.W."/>
            <person name="Passarelli A.L."/>
            <person name="Miller L.K."/>
        </authorList>
    </citation>
    <scope>CHARACTERIZATION</scope>
</reference>
<reference key="4">
    <citation type="journal article" date="2001" name="J. Gen. Virol.">
        <title>Expression and localization of LEF-11 in Autographa californica nucleopolyhedrovirus-infected Sf9 cells.</title>
        <authorList>
            <person name="Lin G."/>
            <person name="Slack J.M."/>
            <person name="Blissard G.W."/>
        </authorList>
    </citation>
    <scope>SUBCELLULAR LOCATION</scope>
</reference>
<reference key="5">
    <citation type="journal article" date="2002" name="J. Virol.">
        <title>Analysis of an Autographa californica nucleopolyhedrovirus lef-11 knockout: LEF-11 is essential for viral DNA replication.</title>
        <authorList>
            <person name="Lin G."/>
            <person name="Blissard G.W."/>
        </authorList>
    </citation>
    <scope>FUNCTION</scope>
</reference>
<reference key="6">
    <citation type="journal article" date="2015" name="PLoS ONE">
        <title>Oligomerization of baculovirus LEF-11 is involved in viral DNA replication.</title>
        <authorList>
            <person name="Dong Z.Q."/>
            <person name="Hu N."/>
            <person name="Zhang J."/>
            <person name="Chen T.T."/>
            <person name="Cao M.Y."/>
            <person name="Li H.Q."/>
            <person name="Lei X.J."/>
            <person name="Chen P."/>
            <person name="Lu C."/>
            <person name="Pan M.H."/>
        </authorList>
    </citation>
    <scope>SUBUNIT</scope>
    <scope>FUNCTION</scope>
</reference>
<dbReference type="EMBL" id="L22858">
    <property type="protein sequence ID" value="AAA66667.1"/>
    <property type="molecule type" value="Genomic_DNA"/>
</dbReference>
<dbReference type="EMBL" id="M37122">
    <property type="protein sequence ID" value="AAA46683.1"/>
    <property type="molecule type" value="Genomic_DNA"/>
</dbReference>
<dbReference type="PIR" id="C45355">
    <property type="entry name" value="C45355"/>
</dbReference>
<dbReference type="KEGG" id="vg:1403869"/>
<dbReference type="OrthoDB" id="15391at10239"/>
<dbReference type="Proteomes" id="UP000008292">
    <property type="component" value="Segment"/>
</dbReference>
<dbReference type="GO" id="GO:0042025">
    <property type="term" value="C:host cell nucleus"/>
    <property type="evidence" value="ECO:0007669"/>
    <property type="project" value="UniProtKB-SubCell"/>
</dbReference>
<dbReference type="GO" id="GO:0006260">
    <property type="term" value="P:DNA replication"/>
    <property type="evidence" value="ECO:0007669"/>
    <property type="project" value="UniProtKB-KW"/>
</dbReference>
<dbReference type="GO" id="GO:0006355">
    <property type="term" value="P:regulation of DNA-templated transcription"/>
    <property type="evidence" value="ECO:0007669"/>
    <property type="project" value="InterPro"/>
</dbReference>
<dbReference type="GO" id="GO:0039693">
    <property type="term" value="P:viral DNA genome replication"/>
    <property type="evidence" value="ECO:0000314"/>
    <property type="project" value="UniProtKB"/>
</dbReference>
<dbReference type="InterPro" id="IPR009429">
    <property type="entry name" value="Baculo_LEF-11"/>
</dbReference>
<dbReference type="Pfam" id="PF06385">
    <property type="entry name" value="Baculo_LEF-11"/>
    <property type="match status" value="1"/>
</dbReference>
<protein>
    <recommendedName>
        <fullName>Late expression factor 11</fullName>
    </recommendedName>
</protein>
<name>LEF11_NPVAC</name>
<proteinExistence type="evidence at protein level"/>